<accession>A5VYC7</accession>
<sequence length="372" mass="39661">MRSKVTGAKRWVVKIGSALLTADGKGLDRGAMAVWVEQMVALREAGVELVLVSSGAVAAGMSQLGWTKRPSAMNELQAAASLGQMRLVQAWESSFGEHGKHTAQILLTHDDLSDRKRYLNARSTLRTLVDLGVVPVINENDTVVTDEIRFGDNDTLAALVANLVEADLLVILTDRDGMFDADPRNNPEAQLIYEARADDPSLDAVAGGTGGALGRGGMQTKLRAARLAARSGAHTIIIGGRIERVLDRLKAGERLGTLLSPERGMLAARKQWLAGHLQTRGTLVLDAGAVQALRQANKSLLPVGVKTVQGSFRRGEMVVCVGPDGVEVARGLANYSALEAQKIIGQSSEAIESILGYSAEPELVHRDNLVLV</sequence>
<dbReference type="EC" id="2.7.2.11" evidence="1"/>
<dbReference type="EMBL" id="CP000712">
    <property type="protein sequence ID" value="ABQ76887.1"/>
    <property type="molecule type" value="Genomic_DNA"/>
</dbReference>
<dbReference type="SMR" id="A5VYC7"/>
<dbReference type="KEGG" id="ppf:Pput_0723"/>
<dbReference type="eggNOG" id="COG0263">
    <property type="taxonomic scope" value="Bacteria"/>
</dbReference>
<dbReference type="HOGENOM" id="CLU_025400_2_0_6"/>
<dbReference type="UniPathway" id="UPA00098">
    <property type="reaction ID" value="UER00359"/>
</dbReference>
<dbReference type="GO" id="GO:0005829">
    <property type="term" value="C:cytosol"/>
    <property type="evidence" value="ECO:0007669"/>
    <property type="project" value="TreeGrafter"/>
</dbReference>
<dbReference type="GO" id="GO:0005524">
    <property type="term" value="F:ATP binding"/>
    <property type="evidence" value="ECO:0007669"/>
    <property type="project" value="UniProtKB-KW"/>
</dbReference>
<dbReference type="GO" id="GO:0004349">
    <property type="term" value="F:glutamate 5-kinase activity"/>
    <property type="evidence" value="ECO:0007669"/>
    <property type="project" value="UniProtKB-UniRule"/>
</dbReference>
<dbReference type="GO" id="GO:0003723">
    <property type="term" value="F:RNA binding"/>
    <property type="evidence" value="ECO:0007669"/>
    <property type="project" value="InterPro"/>
</dbReference>
<dbReference type="GO" id="GO:0055129">
    <property type="term" value="P:L-proline biosynthetic process"/>
    <property type="evidence" value="ECO:0007669"/>
    <property type="project" value="UniProtKB-UniRule"/>
</dbReference>
<dbReference type="CDD" id="cd04242">
    <property type="entry name" value="AAK_G5K_ProB"/>
    <property type="match status" value="1"/>
</dbReference>
<dbReference type="CDD" id="cd21157">
    <property type="entry name" value="PUA_G5K"/>
    <property type="match status" value="1"/>
</dbReference>
<dbReference type="FunFam" id="2.30.130.10:FF:000007">
    <property type="entry name" value="Glutamate 5-kinase"/>
    <property type="match status" value="1"/>
</dbReference>
<dbReference type="FunFam" id="3.40.1160.10:FF:000018">
    <property type="entry name" value="Glutamate 5-kinase"/>
    <property type="match status" value="1"/>
</dbReference>
<dbReference type="Gene3D" id="3.40.1160.10">
    <property type="entry name" value="Acetylglutamate kinase-like"/>
    <property type="match status" value="2"/>
</dbReference>
<dbReference type="Gene3D" id="2.30.130.10">
    <property type="entry name" value="PUA domain"/>
    <property type="match status" value="1"/>
</dbReference>
<dbReference type="HAMAP" id="MF_00456">
    <property type="entry name" value="ProB"/>
    <property type="match status" value="1"/>
</dbReference>
<dbReference type="InterPro" id="IPR036393">
    <property type="entry name" value="AceGlu_kinase-like_sf"/>
</dbReference>
<dbReference type="InterPro" id="IPR001048">
    <property type="entry name" value="Asp/Glu/Uridylate_kinase"/>
</dbReference>
<dbReference type="InterPro" id="IPR041739">
    <property type="entry name" value="G5K_ProB"/>
</dbReference>
<dbReference type="InterPro" id="IPR001057">
    <property type="entry name" value="Glu/AcGlu_kinase"/>
</dbReference>
<dbReference type="InterPro" id="IPR011529">
    <property type="entry name" value="Glu_5kinase"/>
</dbReference>
<dbReference type="InterPro" id="IPR005715">
    <property type="entry name" value="Glu_5kinase/COase_Synthase"/>
</dbReference>
<dbReference type="InterPro" id="IPR019797">
    <property type="entry name" value="Glutamate_5-kinase_CS"/>
</dbReference>
<dbReference type="InterPro" id="IPR002478">
    <property type="entry name" value="PUA"/>
</dbReference>
<dbReference type="InterPro" id="IPR015947">
    <property type="entry name" value="PUA-like_sf"/>
</dbReference>
<dbReference type="InterPro" id="IPR036974">
    <property type="entry name" value="PUA_sf"/>
</dbReference>
<dbReference type="NCBIfam" id="TIGR01027">
    <property type="entry name" value="proB"/>
    <property type="match status" value="1"/>
</dbReference>
<dbReference type="PANTHER" id="PTHR43654">
    <property type="entry name" value="GLUTAMATE 5-KINASE"/>
    <property type="match status" value="1"/>
</dbReference>
<dbReference type="PANTHER" id="PTHR43654:SF1">
    <property type="entry name" value="ISOPENTENYL PHOSPHATE KINASE"/>
    <property type="match status" value="1"/>
</dbReference>
<dbReference type="Pfam" id="PF00696">
    <property type="entry name" value="AA_kinase"/>
    <property type="match status" value="1"/>
</dbReference>
<dbReference type="Pfam" id="PF01472">
    <property type="entry name" value="PUA"/>
    <property type="match status" value="1"/>
</dbReference>
<dbReference type="PIRSF" id="PIRSF000729">
    <property type="entry name" value="GK"/>
    <property type="match status" value="1"/>
</dbReference>
<dbReference type="PRINTS" id="PR00474">
    <property type="entry name" value="GLU5KINASE"/>
</dbReference>
<dbReference type="SMART" id="SM00359">
    <property type="entry name" value="PUA"/>
    <property type="match status" value="1"/>
</dbReference>
<dbReference type="SUPFAM" id="SSF53633">
    <property type="entry name" value="Carbamate kinase-like"/>
    <property type="match status" value="1"/>
</dbReference>
<dbReference type="SUPFAM" id="SSF88697">
    <property type="entry name" value="PUA domain-like"/>
    <property type="match status" value="1"/>
</dbReference>
<dbReference type="PROSITE" id="PS00902">
    <property type="entry name" value="GLUTAMATE_5_KINASE"/>
    <property type="match status" value="1"/>
</dbReference>
<dbReference type="PROSITE" id="PS50890">
    <property type="entry name" value="PUA"/>
    <property type="match status" value="1"/>
</dbReference>
<gene>
    <name evidence="1" type="primary">proB</name>
    <name type="ordered locus">Pput_0723</name>
</gene>
<name>PROB_PSEP1</name>
<comment type="function">
    <text evidence="1">Catalyzes the transfer of a phosphate group to glutamate to form L-glutamate 5-phosphate.</text>
</comment>
<comment type="catalytic activity">
    <reaction evidence="1">
        <text>L-glutamate + ATP = L-glutamyl 5-phosphate + ADP</text>
        <dbReference type="Rhea" id="RHEA:14877"/>
        <dbReference type="ChEBI" id="CHEBI:29985"/>
        <dbReference type="ChEBI" id="CHEBI:30616"/>
        <dbReference type="ChEBI" id="CHEBI:58274"/>
        <dbReference type="ChEBI" id="CHEBI:456216"/>
        <dbReference type="EC" id="2.7.2.11"/>
    </reaction>
</comment>
<comment type="pathway">
    <text evidence="1">Amino-acid biosynthesis; L-proline biosynthesis; L-glutamate 5-semialdehyde from L-glutamate: step 1/2.</text>
</comment>
<comment type="subcellular location">
    <subcellularLocation>
        <location evidence="1">Cytoplasm</location>
    </subcellularLocation>
</comment>
<comment type="similarity">
    <text evidence="1">Belongs to the glutamate 5-kinase family.</text>
</comment>
<reference key="1">
    <citation type="submission" date="2007-05" db="EMBL/GenBank/DDBJ databases">
        <title>Complete sequence of Pseudomonas putida F1.</title>
        <authorList>
            <consortium name="US DOE Joint Genome Institute"/>
            <person name="Copeland A."/>
            <person name="Lucas S."/>
            <person name="Lapidus A."/>
            <person name="Barry K."/>
            <person name="Detter J.C."/>
            <person name="Glavina del Rio T."/>
            <person name="Hammon N."/>
            <person name="Israni S."/>
            <person name="Dalin E."/>
            <person name="Tice H."/>
            <person name="Pitluck S."/>
            <person name="Chain P."/>
            <person name="Malfatti S."/>
            <person name="Shin M."/>
            <person name="Vergez L."/>
            <person name="Schmutz J."/>
            <person name="Larimer F."/>
            <person name="Land M."/>
            <person name="Hauser L."/>
            <person name="Kyrpides N."/>
            <person name="Lykidis A."/>
            <person name="Parales R."/>
            <person name="Richardson P."/>
        </authorList>
    </citation>
    <scope>NUCLEOTIDE SEQUENCE [LARGE SCALE GENOMIC DNA]</scope>
    <source>
        <strain>ATCC 700007 / DSM 6899 / JCM 31910 / BCRC 17059 / LMG 24140 / F1</strain>
    </source>
</reference>
<protein>
    <recommendedName>
        <fullName evidence="1">Glutamate 5-kinase</fullName>
        <ecNumber evidence="1">2.7.2.11</ecNumber>
    </recommendedName>
    <alternativeName>
        <fullName evidence="1">Gamma-glutamyl kinase</fullName>
        <shortName evidence="1">GK</shortName>
    </alternativeName>
</protein>
<keyword id="KW-0028">Amino-acid biosynthesis</keyword>
<keyword id="KW-0067">ATP-binding</keyword>
<keyword id="KW-0963">Cytoplasm</keyword>
<keyword id="KW-0418">Kinase</keyword>
<keyword id="KW-0547">Nucleotide-binding</keyword>
<keyword id="KW-0641">Proline biosynthesis</keyword>
<keyword id="KW-0808">Transferase</keyword>
<feature type="chain" id="PRO_1000081095" description="Glutamate 5-kinase">
    <location>
        <begin position="1"/>
        <end position="372"/>
    </location>
</feature>
<feature type="domain" description="PUA" evidence="1">
    <location>
        <begin position="280"/>
        <end position="358"/>
    </location>
</feature>
<feature type="binding site" evidence="1">
    <location>
        <position position="14"/>
    </location>
    <ligand>
        <name>ATP</name>
        <dbReference type="ChEBI" id="CHEBI:30616"/>
    </ligand>
</feature>
<feature type="binding site" evidence="1">
    <location>
        <position position="54"/>
    </location>
    <ligand>
        <name>substrate</name>
    </ligand>
</feature>
<feature type="binding site" evidence="1">
    <location>
        <position position="141"/>
    </location>
    <ligand>
        <name>substrate</name>
    </ligand>
</feature>
<feature type="binding site" evidence="1">
    <location>
        <position position="153"/>
    </location>
    <ligand>
        <name>substrate</name>
    </ligand>
</feature>
<feature type="binding site" evidence="1">
    <location>
        <begin position="173"/>
        <end position="174"/>
    </location>
    <ligand>
        <name>ATP</name>
        <dbReference type="ChEBI" id="CHEBI:30616"/>
    </ligand>
</feature>
<evidence type="ECO:0000255" key="1">
    <source>
        <dbReference type="HAMAP-Rule" id="MF_00456"/>
    </source>
</evidence>
<proteinExistence type="inferred from homology"/>
<organism>
    <name type="scientific">Pseudomonas putida (strain ATCC 700007 / DSM 6899 / JCM 31910 / BCRC 17059 / LMG 24140 / F1)</name>
    <dbReference type="NCBI Taxonomy" id="351746"/>
    <lineage>
        <taxon>Bacteria</taxon>
        <taxon>Pseudomonadati</taxon>
        <taxon>Pseudomonadota</taxon>
        <taxon>Gammaproteobacteria</taxon>
        <taxon>Pseudomonadales</taxon>
        <taxon>Pseudomonadaceae</taxon>
        <taxon>Pseudomonas</taxon>
    </lineage>
</organism>